<evidence type="ECO:0000250" key="1"/>
<evidence type="ECO:0000255" key="2"/>
<evidence type="ECO:0000305" key="3"/>
<accession>P93111</accession>
<name>HEM11_CUCSA</name>
<feature type="transit peptide" description="Chloroplast" evidence="2">
    <location>
        <begin position="1"/>
        <end status="unknown"/>
    </location>
</feature>
<feature type="chain" id="PRO_0000013309" description="Glutamyl-tRNA reductase 1, chloroplastic">
    <location>
        <begin status="unknown"/>
        <end position="552"/>
    </location>
</feature>
<feature type="active site" description="Nucleophile" evidence="1">
    <location>
        <position position="151"/>
    </location>
</feature>
<feature type="binding site" evidence="1">
    <location>
        <begin position="150"/>
        <end position="153"/>
    </location>
    <ligand>
        <name>substrate</name>
    </ligand>
</feature>
<feature type="binding site" evidence="1">
    <location>
        <position position="210"/>
    </location>
    <ligand>
        <name>substrate</name>
    </ligand>
</feature>
<feature type="binding site" evidence="1">
    <location>
        <begin position="215"/>
        <end position="217"/>
    </location>
    <ligand>
        <name>substrate</name>
    </ligand>
</feature>
<feature type="binding site" evidence="1">
    <location>
        <position position="221"/>
    </location>
    <ligand>
        <name>substrate</name>
    </ligand>
</feature>
<feature type="binding site" evidence="1">
    <location>
        <begin position="292"/>
        <end position="297"/>
    </location>
    <ligand>
        <name>NADP(+)</name>
        <dbReference type="ChEBI" id="CHEBI:58349"/>
    </ligand>
</feature>
<feature type="site" description="Important for activity" evidence="1">
    <location>
        <position position="200"/>
    </location>
</feature>
<proteinExistence type="evidence at transcript level"/>
<organism>
    <name type="scientific">Cucumis sativus</name>
    <name type="common">Cucumber</name>
    <dbReference type="NCBI Taxonomy" id="3659"/>
    <lineage>
        <taxon>Eukaryota</taxon>
        <taxon>Viridiplantae</taxon>
        <taxon>Streptophyta</taxon>
        <taxon>Embryophyta</taxon>
        <taxon>Tracheophyta</taxon>
        <taxon>Spermatophyta</taxon>
        <taxon>Magnoliopsida</taxon>
        <taxon>eudicotyledons</taxon>
        <taxon>Gunneridae</taxon>
        <taxon>Pentapetalae</taxon>
        <taxon>rosids</taxon>
        <taxon>fabids</taxon>
        <taxon>Cucurbitales</taxon>
        <taxon>Cucurbitaceae</taxon>
        <taxon>Benincaseae</taxon>
        <taxon>Cucumis</taxon>
    </lineage>
</organism>
<sequence length="552" mass="60895">MAVSTSFSGAKLEALLFKSASNSSSTRNLSSSHLPGFCKSIRTRRILFQRTGVSSFTPFKCELASSDVLVQNDEIDPPKSSNLSALEQLKTSAVDRYTKERSSIVVIGLSIHTTPVEMREKLAIPEAEWPRAIGELCGLNHIEEAAVLSTCNRMEIYVVALSQHRGVKEVTEWMSKTSGIPVSEICQHRFLLYNNDATQHIFEVSAGLDSLVLGEGQILAQVKQVVKVGQGVAGFGRNISGLFKHAITVGKRVRTETNIAAGAVSVSSAAVELALMKLPEPSHATARMLVIGAGKMGKLVIKHLVAKGCTKMVVVNRSEERVTAIREEMKDVEIIYKPLTEMLSCTAEADVIFTSTASESLLFTKEQVKDLPPVGHDVGGLRLFIDISVPRNVGACINNLEDVRVYNVDDLKEVVAANKEDRLRKAMEAQSIITEESKQFEAWRDSLETVPTIKKLRAYAERIRTAELEKCLSKMGDDIPKKTRRAVDDLSRGIVNKLLHGPMQHLRCDGSDSRTLSETLENMHALNRMFSLETEIAVLEQKIRAKVEQNQK</sequence>
<protein>
    <recommendedName>
        <fullName>Glutamyl-tRNA reductase 1, chloroplastic</fullName>
        <shortName>GluTR</shortName>
        <ecNumber>1.2.1.70</ecNumber>
    </recommendedName>
</protein>
<reference key="1">
    <citation type="journal article" date="1996" name="Plant Physiol.">
        <title>Differential expression of two hemA mRNAs encoding glutamyl-tRNA reductase proteins in greening cucumber seedlings.</title>
        <authorList>
            <person name="Tanaka R."/>
            <person name="Yoshida K."/>
            <person name="Nakayashiki T."/>
            <person name="Masuda T."/>
            <person name="Tsuji H."/>
            <person name="Inokuchi H."/>
            <person name="Tanaka A."/>
        </authorList>
    </citation>
    <scope>NUCLEOTIDE SEQUENCE [MRNA]</scope>
    <source>
        <strain>cv. Aonagajibai</strain>
        <tissue>Cotyledon</tissue>
    </source>
</reference>
<gene>
    <name type="primary">HEMA1</name>
</gene>
<keyword id="KW-0149">Chlorophyll biosynthesis</keyword>
<keyword id="KW-0150">Chloroplast</keyword>
<keyword id="KW-0521">NADP</keyword>
<keyword id="KW-0560">Oxidoreductase</keyword>
<keyword id="KW-0934">Plastid</keyword>
<keyword id="KW-0627">Porphyrin biosynthesis</keyword>
<keyword id="KW-0809">Transit peptide</keyword>
<dbReference type="EC" id="1.2.1.70"/>
<dbReference type="EMBL" id="D50407">
    <property type="protein sequence ID" value="BAA08910.1"/>
    <property type="molecule type" value="mRNA"/>
</dbReference>
<dbReference type="PIR" id="T10186">
    <property type="entry name" value="T10186"/>
</dbReference>
<dbReference type="RefSeq" id="NP_001267503.1">
    <property type="nucleotide sequence ID" value="NM_001280574.1"/>
</dbReference>
<dbReference type="SMR" id="P93111"/>
<dbReference type="EnsemblPlants" id="KGN62779">
    <property type="protein sequence ID" value="KGN62779"/>
    <property type="gene ID" value="Csa_2G372750"/>
</dbReference>
<dbReference type="GeneID" id="101220615"/>
<dbReference type="Gramene" id="KGN62779">
    <property type="protein sequence ID" value="KGN62779"/>
    <property type="gene ID" value="Csa_2G372750"/>
</dbReference>
<dbReference type="KEGG" id="csv:101220615"/>
<dbReference type="eggNOG" id="ENOG502QQ1H">
    <property type="taxonomic scope" value="Eukaryota"/>
</dbReference>
<dbReference type="OMA" id="EIYVVAM"/>
<dbReference type="OrthoDB" id="424281at2759"/>
<dbReference type="UniPathway" id="UPA00251">
    <property type="reaction ID" value="UER00316"/>
</dbReference>
<dbReference type="GO" id="GO:0009507">
    <property type="term" value="C:chloroplast"/>
    <property type="evidence" value="ECO:0007669"/>
    <property type="project" value="UniProtKB-SubCell"/>
</dbReference>
<dbReference type="GO" id="GO:0008883">
    <property type="term" value="F:glutamyl-tRNA reductase activity"/>
    <property type="evidence" value="ECO:0007669"/>
    <property type="project" value="UniProtKB-EC"/>
</dbReference>
<dbReference type="GO" id="GO:0050661">
    <property type="term" value="F:NADP binding"/>
    <property type="evidence" value="ECO:0007669"/>
    <property type="project" value="InterPro"/>
</dbReference>
<dbReference type="GO" id="GO:0015995">
    <property type="term" value="P:chlorophyll biosynthetic process"/>
    <property type="evidence" value="ECO:0007669"/>
    <property type="project" value="UniProtKB-KW"/>
</dbReference>
<dbReference type="GO" id="GO:0006782">
    <property type="term" value="P:protoporphyrinogen IX biosynthetic process"/>
    <property type="evidence" value="ECO:0007669"/>
    <property type="project" value="UniProtKB-UniPathway"/>
</dbReference>
<dbReference type="CDD" id="cd05213">
    <property type="entry name" value="NAD_bind_Glutamyl_tRNA_reduct"/>
    <property type="match status" value="1"/>
</dbReference>
<dbReference type="FunFam" id="3.30.460.30:FF:000001">
    <property type="entry name" value="Glutamyl-tRNA reductase"/>
    <property type="match status" value="1"/>
</dbReference>
<dbReference type="FunFam" id="3.40.50.720:FF:000031">
    <property type="entry name" value="Glutamyl-tRNA reductase"/>
    <property type="match status" value="1"/>
</dbReference>
<dbReference type="Gene3D" id="3.30.460.30">
    <property type="entry name" value="Glutamyl-tRNA reductase, N-terminal domain"/>
    <property type="match status" value="1"/>
</dbReference>
<dbReference type="Gene3D" id="3.40.50.720">
    <property type="entry name" value="NAD(P)-binding Rossmann-like Domain"/>
    <property type="match status" value="1"/>
</dbReference>
<dbReference type="HAMAP" id="MF_00087">
    <property type="entry name" value="Glu_tRNA_reductase"/>
    <property type="match status" value="1"/>
</dbReference>
<dbReference type="InterPro" id="IPR000343">
    <property type="entry name" value="4pyrrol_synth_GluRdtase"/>
</dbReference>
<dbReference type="InterPro" id="IPR015896">
    <property type="entry name" value="4pyrrol_synth_GluRdtase_dimer"/>
</dbReference>
<dbReference type="InterPro" id="IPR015895">
    <property type="entry name" value="4pyrrol_synth_GluRdtase_N"/>
</dbReference>
<dbReference type="InterPro" id="IPR018214">
    <property type="entry name" value="GluRdtase_CS"/>
</dbReference>
<dbReference type="InterPro" id="IPR036453">
    <property type="entry name" value="GluRdtase_dimer_dom_sf"/>
</dbReference>
<dbReference type="InterPro" id="IPR036343">
    <property type="entry name" value="GluRdtase_N_sf"/>
</dbReference>
<dbReference type="InterPro" id="IPR036291">
    <property type="entry name" value="NAD(P)-bd_dom_sf"/>
</dbReference>
<dbReference type="InterPro" id="IPR006151">
    <property type="entry name" value="Shikm_DH/Glu-tRNA_Rdtase"/>
</dbReference>
<dbReference type="NCBIfam" id="TIGR01035">
    <property type="entry name" value="hemA"/>
    <property type="match status" value="1"/>
</dbReference>
<dbReference type="NCBIfam" id="NF000744">
    <property type="entry name" value="PRK00045.1-3"/>
    <property type="match status" value="1"/>
</dbReference>
<dbReference type="PANTHER" id="PTHR43120">
    <property type="entry name" value="GLUTAMYL-TRNA REDUCTASE 1, CHLOROPLASTIC"/>
    <property type="match status" value="1"/>
</dbReference>
<dbReference type="PANTHER" id="PTHR43120:SF1">
    <property type="entry name" value="GLUTAMYL-TRNA REDUCTASE 1, CHLOROPLASTIC"/>
    <property type="match status" value="1"/>
</dbReference>
<dbReference type="Pfam" id="PF00745">
    <property type="entry name" value="GlutR_dimer"/>
    <property type="match status" value="1"/>
</dbReference>
<dbReference type="Pfam" id="PF05201">
    <property type="entry name" value="GlutR_N"/>
    <property type="match status" value="1"/>
</dbReference>
<dbReference type="Pfam" id="PF01488">
    <property type="entry name" value="Shikimate_DH"/>
    <property type="match status" value="1"/>
</dbReference>
<dbReference type="SUPFAM" id="SSF69742">
    <property type="entry name" value="Glutamyl tRNA-reductase catalytic, N-terminal domain"/>
    <property type="match status" value="1"/>
</dbReference>
<dbReference type="SUPFAM" id="SSF69075">
    <property type="entry name" value="Glutamyl tRNA-reductase dimerization domain"/>
    <property type="match status" value="1"/>
</dbReference>
<dbReference type="SUPFAM" id="SSF51735">
    <property type="entry name" value="NAD(P)-binding Rossmann-fold domains"/>
    <property type="match status" value="1"/>
</dbReference>
<dbReference type="PROSITE" id="PS00747">
    <property type="entry name" value="GLUTR"/>
    <property type="match status" value="1"/>
</dbReference>
<comment type="function">
    <text evidence="1">Catalyzes the NADPH-dependent reduction of glutamyl-tRNA(Glu) to glutamate 1-semialdehyde (GSA).</text>
</comment>
<comment type="catalytic activity">
    <reaction>
        <text>(S)-4-amino-5-oxopentanoate + tRNA(Glu) + NADP(+) = L-glutamyl-tRNA(Glu) + NADPH + H(+)</text>
        <dbReference type="Rhea" id="RHEA:12344"/>
        <dbReference type="Rhea" id="RHEA-COMP:9663"/>
        <dbReference type="Rhea" id="RHEA-COMP:9680"/>
        <dbReference type="ChEBI" id="CHEBI:15378"/>
        <dbReference type="ChEBI" id="CHEBI:57501"/>
        <dbReference type="ChEBI" id="CHEBI:57783"/>
        <dbReference type="ChEBI" id="CHEBI:58349"/>
        <dbReference type="ChEBI" id="CHEBI:78442"/>
        <dbReference type="ChEBI" id="CHEBI:78520"/>
        <dbReference type="EC" id="1.2.1.70"/>
    </reaction>
</comment>
<comment type="pathway">
    <text>Porphyrin-containing compound metabolism; protoporphyrin-IX biosynthesis; 5-aminolevulinate from L-glutamyl-tRNA(Glu): step 1/2.</text>
</comment>
<comment type="subcellular location">
    <subcellularLocation>
        <location evidence="1">Plastid</location>
        <location evidence="1">Chloroplast</location>
    </subcellularLocation>
</comment>
<comment type="tissue specificity">
    <text>Primarily in cotyledons and hypocotyls of greening cucumber seedlings.</text>
</comment>
<comment type="miscellaneous">
    <text evidence="1">During catalysis, the active site Cys acts as a nucleophile attacking the alpha-carbonyl group of tRNA-bound glutamate with the formation of a thioester intermediate between enzyme and glutamate, and the concomitant release of tRNA(Glu). The thioester intermediate is finally reduced by direct hydride transfer from NADPH, to form the product GSA (By similarity).</text>
</comment>
<comment type="similarity">
    <text evidence="3">Belongs to the glutamyl-tRNA reductase family.</text>
</comment>